<dbReference type="EMBL" id="AMRA01000053">
    <property type="protein sequence ID" value="EKF23913.1"/>
    <property type="molecule type" value="Genomic_DNA"/>
</dbReference>
<dbReference type="EMBL" id="LR026975">
    <property type="protein sequence ID" value="VCT90463.1"/>
    <property type="molecule type" value="Genomic_DNA"/>
</dbReference>
<dbReference type="RefSeq" id="WP_005627275.1">
    <property type="nucleotide sequence ID" value="NZ_AMRA01000053.1"/>
</dbReference>
<dbReference type="PDB" id="8PNL">
    <property type="method" value="X-ray"/>
    <property type="resolution" value="2.70 A"/>
    <property type="chains" value="A/C=2-535"/>
</dbReference>
<dbReference type="PDBsum" id="8PNL"/>
<dbReference type="EMDB" id="EMD-17787"/>
<dbReference type="SMR" id="K5B8L6"/>
<dbReference type="STRING" id="1122247.GCA_000379865_00122"/>
<dbReference type="KEGG" id="mhas:MHAS_02168"/>
<dbReference type="PATRIC" id="fig|1122247.3.peg.2027"/>
<dbReference type="eggNOG" id="COG0477">
    <property type="taxonomic scope" value="Bacteria"/>
</dbReference>
<dbReference type="OrthoDB" id="3453194at2"/>
<dbReference type="Proteomes" id="UP000006265">
    <property type="component" value="Unassembled WGS sequence"/>
</dbReference>
<dbReference type="GO" id="GO:0005886">
    <property type="term" value="C:plasma membrane"/>
    <property type="evidence" value="ECO:0007669"/>
    <property type="project" value="UniProtKB-SubCell"/>
</dbReference>
<dbReference type="GO" id="GO:0008289">
    <property type="term" value="F:lipid binding"/>
    <property type="evidence" value="ECO:0007669"/>
    <property type="project" value="UniProtKB-KW"/>
</dbReference>
<dbReference type="GO" id="GO:0022857">
    <property type="term" value="F:transmembrane transporter activity"/>
    <property type="evidence" value="ECO:0007669"/>
    <property type="project" value="InterPro"/>
</dbReference>
<dbReference type="GO" id="GO:0006869">
    <property type="term" value="P:lipid transport"/>
    <property type="evidence" value="ECO:0007669"/>
    <property type="project" value="UniProtKB-KW"/>
</dbReference>
<dbReference type="CDD" id="cd17321">
    <property type="entry name" value="MFS_MMR_MDR_like"/>
    <property type="match status" value="1"/>
</dbReference>
<dbReference type="Gene3D" id="1.20.1250.20">
    <property type="entry name" value="MFS general substrate transporter like domains"/>
    <property type="match status" value="1"/>
</dbReference>
<dbReference type="Gene3D" id="1.20.1720.10">
    <property type="entry name" value="Multidrug resistance protein D"/>
    <property type="match status" value="1"/>
</dbReference>
<dbReference type="InterPro" id="IPR011701">
    <property type="entry name" value="MFS"/>
</dbReference>
<dbReference type="InterPro" id="IPR020846">
    <property type="entry name" value="MFS_dom"/>
</dbReference>
<dbReference type="InterPro" id="IPR036259">
    <property type="entry name" value="MFS_trans_sf"/>
</dbReference>
<dbReference type="InterPro" id="IPR005829">
    <property type="entry name" value="Sugar_transporter_CS"/>
</dbReference>
<dbReference type="PANTHER" id="PTHR23501">
    <property type="entry name" value="MAJOR FACILITATOR SUPERFAMILY"/>
    <property type="match status" value="1"/>
</dbReference>
<dbReference type="PANTHER" id="PTHR23501:SF191">
    <property type="entry name" value="VACUOLAR BASIC AMINO ACID TRANSPORTER 4"/>
    <property type="match status" value="1"/>
</dbReference>
<dbReference type="Pfam" id="PF07690">
    <property type="entry name" value="MFS_1"/>
    <property type="match status" value="1"/>
</dbReference>
<dbReference type="SUPFAM" id="SSF103473">
    <property type="entry name" value="MFS general substrate transporter"/>
    <property type="match status" value="1"/>
</dbReference>
<dbReference type="PROSITE" id="PS50850">
    <property type="entry name" value="MFS"/>
    <property type="match status" value="1"/>
</dbReference>
<dbReference type="PROSITE" id="PS00216">
    <property type="entry name" value="SUGAR_TRANSPORT_1"/>
    <property type="match status" value="1"/>
</dbReference>
<name>MFS55_MYCHD</name>
<sequence>MAFPQTPNRLIRPRRTSRGIAISAGGLAVLLGALDTYVVVSIVTDIMRDVGIAVNQIQRVTPIITGYLLGYIAAMPLLGRASDRFGRKLLIQISLAGFALGSVITALATNLDVLVAGRVIQGAASGALLPVTLALAADLWATHKRAAVLGGVGAAQELGAVLGPIYGIFVVWLFHHWQAVFWVNVPLALIAMVLIHISLPPRVRTEEPQRVDVTGGLLLALALGLATIGLYNAEPDGKQVLPEYGPPLIIGAVIAAVAFLVWERFARTRLLDPAGVRFRPFLIALLVSLVTGGALMVTLVNVELFGQGVLGLDQDEAVFLLARFLIALPVGALLGGWIATRVGDRAVTAVGLLIAAGGFYLIAQWPADVLESRHDLGFVSLPTLDTDLAIAGFGLGLVIAPLTSAALRVVPAAQHGIASAAVVVARMIGMLIGIAALSAWGLYRFNQYLKEQLAALPPAPADFPGGQMAGQMMRLRTATVQAYVLQYGEIFAITAGLCVFGAVLGLFIAGRREHAEESADAVDGVSNARDRAPSA</sequence>
<proteinExistence type="evidence at protein level"/>
<organism>
    <name type="scientific">Mycolicibacterium hassiacum (strain DSM 44199 / CIP 105218 / JCM 12690 / 3849)</name>
    <name type="common">Mycobacterium hassiacum</name>
    <dbReference type="NCBI Taxonomy" id="1122247"/>
    <lineage>
        <taxon>Bacteria</taxon>
        <taxon>Bacillati</taxon>
        <taxon>Actinomycetota</taxon>
        <taxon>Actinomycetes</taxon>
        <taxon>Mycobacteriales</taxon>
        <taxon>Mycobacteriaceae</taxon>
        <taxon>Mycolicibacterium</taxon>
    </lineage>
</organism>
<keyword id="KW-0002">3D-structure</keyword>
<keyword id="KW-0997">Cell inner membrane</keyword>
<keyword id="KW-1003">Cell membrane</keyword>
<keyword id="KW-0445">Lipid transport</keyword>
<keyword id="KW-0446">Lipid-binding</keyword>
<keyword id="KW-0472">Membrane</keyword>
<keyword id="KW-1185">Reference proteome</keyword>
<keyword id="KW-0812">Transmembrane</keyword>
<keyword id="KW-1133">Transmembrane helix</keyword>
<keyword id="KW-0813">Transport</keyword>
<comment type="function">
    <text evidence="1 4">In association with lipoprotein LprG transports triacylglycerides (TAG) across the inner cell membrane, probably transfering them to lipoprotein LprG in the periplasm (PubMed:37833269). TAG probably regulates lipid metabolism and growth regulation and plays a structural role in the outer membrane (Probable). Mutagenesis and molecular modeling suggests TAG (and maybe other lipids) enters the central cavity of the P55 transporter from within the cell inner membrane via clefts on the cytoplasmic face of P55 between TM5-TM8 and TM2-TM11 (Probable) (PubMed:37833269). From there the lipid is probably transferred to the hydrophobic cavity of LprG (Probable) (PubMed:37833269). The lprG-MHAS_02167/C731_2107 operon complements the vancomycin sensitivity of an M.smegmatis knockout of the same operon (PubMed:37833269). Probably required with LprG for normal surface localization of lipoarabinomannan (LAM).</text>
</comment>
<comment type="subcellular location">
    <subcellularLocation>
        <location evidence="4">Cell inner membrane</location>
        <topology evidence="1">Multi-pass membrane protein</topology>
    </subcellularLocation>
</comment>
<comment type="induction">
    <text evidence="1">Part of the lprG-MHAS_02167/C731_2107 operon (PubMed:37833269).</text>
</comment>
<comment type="domain">
    <text evidence="1">Has a canonical major facilitator superfamily fold with two N- and C-terminal domains of 6 transmembrane helices (TM1-6 and TM7-12) and two transmembrane helices between the domains (TMA and TMB) that form a hairpin (PubMed:37833269). In the open out conformation (PDB:8PNL) has a large, periplasm-facing cavity constricted on its cytoplasmic side by a salt bridge (PubMed:37833269). Between TM9-TM10 is a periplasmic beta-hairpin that extends along the membrane plane, helices TM11 and TM12 extend 20 Angstroms into the periplasm (PubMed:37833269). Asp-35 is a possible protonation/deprotonation site (PubMed:37833269).</text>
</comment>
<comment type="similarity">
    <text evidence="3">Belongs to the major facilitator superfamily. P55 (TC 2.A.1.3.34) family.</text>
</comment>
<gene>
    <name evidence="5" type="ORF">C731_2106</name>
    <name evidence="6" type="ORF">MHAS_02168</name>
</gene>
<reference evidence="5" key="1">
    <citation type="journal article" date="2012" name="J. Bacteriol.">
        <title>Genome sequence of Mycobacterium hassiacum DSM 44199, a rare source of heat-stable mycobacterial proteins.</title>
        <authorList>
            <person name="Tiago I."/>
            <person name="Maranha A."/>
            <person name="Mendes V."/>
            <person name="Alarico S."/>
            <person name="Moynihan P.J."/>
            <person name="Clarke A.J."/>
            <person name="Macedo-Ribeiro S."/>
            <person name="Pereira P.J."/>
            <person name="Empadinhas N."/>
        </authorList>
    </citation>
    <scope>NUCLEOTIDE SEQUENCE [LARGE SCALE GENOMIC DNA]</scope>
    <source>
        <strain>DSM 44199 / CIP 105218 / JCM 12690 / 3849</strain>
    </source>
</reference>
<reference evidence="6" key="2">
    <citation type="journal article" date="2019" name="Microbiol. Resour. Announc.">
        <title>Complete genome sequence of Mycolicibacterium hassiacum DSM 44199.</title>
        <authorList>
            <person name="Sanchez M."/>
            <person name="Blesa A."/>
            <person name="Sacristan-Horcajada E."/>
            <person name="Berenguer J."/>
        </authorList>
    </citation>
    <scope>NUCLEOTIDE SEQUENCE [LARGE SCALE GENOMIC DNA]</scope>
    <source>
        <strain>DSM 44199 / CIP 105218 / JCM 12690 / 3849</strain>
    </source>
</reference>
<reference evidence="7" key="3">
    <citation type="journal article" date="2023" name="Nat. Commun.">
        <title>Structural basis for triacylglyceride extraction from mycobacterial inner membrane by MFS transporter Rv1410.</title>
        <authorList>
            <person name="Remm S."/>
            <person name="De Vecchis D."/>
            <person name="Schoppe J."/>
            <person name="Hutter C.A.J."/>
            <person name="Gonda I."/>
            <person name="Hohl M."/>
            <person name="Newstead S."/>
            <person name="Schafer L.V."/>
            <person name="Seeger M.A."/>
        </authorList>
    </citation>
    <scope>X-RAY CRYSTALLOGRAPHY (2.70 ANGSTROMS) OF 2-535</scope>
    <scope>FUNCTION</scope>
    <scope>OPERON STRUCTURE</scope>
    <scope>DOMAIN</scope>
    <scope>TOPOLOGY</scope>
    <scope>MUTAGENESIS OF ASP-35; ASP-83; GLY-150; GLU-157; 213-VAL--PHE-265; LEU-299; 373-ARG--PRO-382; ALA-420; ARG-426; 451-GLU--ALA-478; 453-LEU--ARG-474; MET-468; THR-479 AND TYR-483</scope>
    <source>
        <strain>DSM 44199 / CIP 105218 / JCM 12690 / 3849</strain>
    </source>
</reference>
<protein>
    <recommendedName>
        <fullName evidence="2">Triacylglyceride transporter MHAS_02168/C731_2106</fullName>
    </recommendedName>
    <alternativeName>
        <fullName>MFS-type drug efflux transporter P55</fullName>
    </alternativeName>
</protein>
<accession>K5B8L6</accession>
<evidence type="ECO:0000269" key="1">
    <source>
    </source>
</evidence>
<evidence type="ECO:0000303" key="2">
    <source>
    </source>
</evidence>
<evidence type="ECO:0000305" key="3"/>
<evidence type="ECO:0000305" key="4">
    <source>
    </source>
</evidence>
<evidence type="ECO:0000312" key="5">
    <source>
        <dbReference type="EMBL" id="EKF23913.1"/>
    </source>
</evidence>
<evidence type="ECO:0000312" key="6">
    <source>
        <dbReference type="EMBL" id="VCT90463.1"/>
    </source>
</evidence>
<evidence type="ECO:0007744" key="7">
    <source>
        <dbReference type="PDB" id="8PNL"/>
    </source>
</evidence>
<evidence type="ECO:0007829" key="8">
    <source>
        <dbReference type="PDB" id="8PNL"/>
    </source>
</evidence>
<feature type="chain" id="PRO_0000460926" description="Triacylglyceride transporter MHAS_02168/C731_2106">
    <location>
        <begin position="1"/>
        <end position="535"/>
    </location>
</feature>
<feature type="topological domain" description="Cytoplasmic" evidence="4">
    <location>
        <begin position="1"/>
        <end position="18"/>
    </location>
</feature>
<feature type="transmembrane region" description="Helical; Name=TM1" evidence="4">
    <location>
        <begin position="19"/>
        <end position="39"/>
    </location>
</feature>
<feature type="topological domain" description="Periplasmic" evidence="4">
    <location>
        <begin position="40"/>
        <end position="60"/>
    </location>
</feature>
<feature type="transmembrane region" description="Helical; Name=TM22" evidence="4">
    <location>
        <begin position="61"/>
        <end position="82"/>
    </location>
</feature>
<feature type="topological domain" description="Cytoplasmic" evidence="4">
    <location>
        <begin position="83"/>
        <end position="86"/>
    </location>
</feature>
<feature type="transmembrane region" description="Helical; Name=TM3" evidence="4">
    <location>
        <begin position="87"/>
        <end position="107"/>
    </location>
</feature>
<feature type="topological domain" description="Periplasmic" evidence="4">
    <location>
        <begin position="108"/>
        <end position="111"/>
    </location>
</feature>
<feature type="transmembrane region" description="Helical; Name=TM4" evidence="4">
    <location>
        <begin position="112"/>
        <end position="136"/>
    </location>
</feature>
<feature type="topological domain" description="Cytoplasmic" evidence="4">
    <location>
        <begin position="137"/>
        <end position="145"/>
    </location>
</feature>
<feature type="transmembrane region" description="Helical; Name=TM5" evidence="4">
    <location>
        <begin position="146"/>
        <end position="167"/>
    </location>
</feature>
<feature type="topological domain" description="Periplasmic" evidence="4">
    <location>
        <begin position="168"/>
        <end position="177"/>
    </location>
</feature>
<feature type="transmembrane region" description="Helical; Name=TM6" evidence="4">
    <location>
        <begin position="178"/>
        <end position="198"/>
    </location>
</feature>
<feature type="topological domain" description="Cytoplasmic" evidence="4">
    <location>
        <begin position="199"/>
        <end position="212"/>
    </location>
</feature>
<feature type="transmembrane region" description="Helical; Name=TMA" evidence="4">
    <location>
        <begin position="213"/>
        <end position="230"/>
    </location>
</feature>
<feature type="topological domain" description="Periplasmic" evidence="4">
    <location>
        <begin position="231"/>
        <end position="243"/>
    </location>
</feature>
<feature type="transmembrane region" description="Helical; Name=TMB" evidence="4">
    <location>
        <begin position="244"/>
        <end position="263"/>
    </location>
</feature>
<feature type="topological domain" description="Cytoplasmic" evidence="4">
    <location>
        <begin position="264"/>
        <end position="278"/>
    </location>
</feature>
<feature type="transmembrane region" description="Helical; Name=TM7" evidence="4">
    <location>
        <begin position="279"/>
        <end position="300"/>
    </location>
</feature>
<feature type="topological domain" description="Periplasmic" evidence="4">
    <location>
        <begin position="301"/>
        <end position="320"/>
    </location>
</feature>
<feature type="transmembrane region" description="Helical; Name=TM8" evidence="4">
    <location>
        <begin position="321"/>
        <end position="343"/>
    </location>
</feature>
<feature type="transmembrane region" description="Helical; Name=TM9" evidence="4">
    <location>
        <begin position="344"/>
        <end position="364"/>
    </location>
</feature>
<feature type="topological domain" description="Periplasmic" evidence="4">
    <location>
        <begin position="365"/>
        <end position="384"/>
    </location>
</feature>
<feature type="transmembrane region" description="Helical; Name=TM10" evidence="4">
    <location>
        <begin position="385"/>
        <end position="407"/>
    </location>
</feature>
<feature type="topological domain" description="Cytoplasmic" evidence="4">
    <location>
        <begin position="408"/>
        <end position="415"/>
    </location>
</feature>
<feature type="transmembrane region" description="Helical; Name=TM11" evidence="4">
    <location>
        <begin position="416"/>
        <end position="440"/>
    </location>
</feature>
<feature type="topological domain" description="Periplasmic" evidence="4">
    <location>
        <begin position="441"/>
        <end position="487"/>
    </location>
</feature>
<feature type="transmembrane region" description="Helical; Name=TM12" evidence="4">
    <location>
        <begin position="488"/>
        <end position="507"/>
    </location>
</feature>
<feature type="topological domain" description="Cytoplasmic" evidence="4">
    <location>
        <begin position="508"/>
        <end position="535"/>
    </location>
</feature>
<feature type="region of interest" description="Beta-hairpin" evidence="1">
    <location>
        <begin position="373"/>
        <end position="382"/>
    </location>
</feature>
<feature type="site" description="Protonation/deprotonation site" evidence="4">
    <location>
        <position position="35"/>
    </location>
</feature>
<feature type="site" description="Forms salt bridge with Arg-426, probably closes bottom of cavity" evidence="1">
    <location>
        <position position="157"/>
    </location>
</feature>
<feature type="site" description="Forms salt bridge with Gln-157, probably closes bottom of cavity" evidence="1">
    <location>
        <position position="426"/>
    </location>
</feature>
<feature type="mutagenesis site" description="Poorly complements for vancomycin resistance in M.smegmatis." evidence="1">
    <original>D</original>
    <variation>N</variation>
    <location>
        <position position="35"/>
    </location>
</feature>
<feature type="mutagenesis site" description="No longer complements for vancomycin resistance in M.smegmatis." evidence="1">
    <original>D</original>
    <variation>N</variation>
    <location>
        <position position="83"/>
    </location>
</feature>
<feature type="mutagenesis site" description="No longer complements for vancomycin resistance in M.smegmatis, in TM5." evidence="1">
    <original>G</original>
    <variation>D</variation>
    <location>
        <position position="150"/>
    </location>
</feature>
<feature type="mutagenesis site" description="Partially complements for vancomycin resistance in M.smegmatis." evidence="1">
    <original>E</original>
    <variation>Q</variation>
    <location>
        <position position="157"/>
    </location>
</feature>
<feature type="mutagenesis site" description="No longer complements for vancomycin resistance in M.smegmatis, loss of TMA-TMB hairpin." evidence="1">
    <location>
        <begin position="213"/>
        <end position="265"/>
    </location>
</feature>
<feature type="mutagenesis site" description="Still complements for vancomycin resistance in M.smegmatis." evidence="1">
    <original>L</original>
    <variation>D</variation>
    <location>
        <position position="299"/>
    </location>
</feature>
<feature type="mutagenesis site" description="No longer complements for vancomycin resistance in M.smegmatis." evidence="1">
    <original>L</original>
    <variation>R</variation>
    <location>
        <position position="299"/>
    </location>
</feature>
<feature type="mutagenesis site" description="Still complements for vancomycin resistance in M.smegmatis, loss of beta-hairpin." evidence="1">
    <original>RHDLGFVSLP</original>
    <variation>GGGG</variation>
    <location>
        <begin position="373"/>
        <end position="382"/>
    </location>
</feature>
<feature type="mutagenesis site" description="No longer complements for vancomycin resistance in M.smegmatis, in TM11." evidence="1">
    <original>A</original>
    <variation>D</variation>
    <location>
        <position position="420"/>
    </location>
</feature>
<feature type="mutagenesis site" description="No longer complements for vancomycin resistance in M.smegmatis." evidence="1">
    <original>R</original>
    <variation>A</variation>
    <location>
        <position position="426"/>
    </location>
</feature>
<feature type="mutagenesis site" description="No longer complements for vancomycin resistance in M.smegmatis." evidence="1">
    <original>EQLAALPPAPADFPGGQMAGQMMRLRTA</original>
    <variation>GGGGGG</variation>
    <location>
        <begin position="451"/>
        <end position="478"/>
    </location>
</feature>
<feature type="mutagenesis site" description="No longer complements for vancomycin resistance in M.smegmatis." evidence="1">
    <original>LAALPPAPADFPGGQMAGQMMR</original>
    <variation>GGGG</variation>
    <location>
        <begin position="453"/>
        <end position="474"/>
    </location>
</feature>
<feature type="mutagenesis site" description="Partially complements for vancomycin resistance in M.smegmatis." evidence="1">
    <original>M</original>
    <variation>D</variation>
    <variation>K</variation>
    <location>
        <position position="468"/>
    </location>
</feature>
<feature type="mutagenesis site" description="Partially complements for vancomycin resistance in M.smegmatis." evidence="1">
    <original>T</original>
    <variation>A</variation>
    <variation>E</variation>
    <location>
        <position position="479"/>
    </location>
</feature>
<feature type="mutagenesis site" description="Partially complements for vancomycin resistance in M.smegmatis." evidence="1">
    <original>Y</original>
    <variation>A</variation>
    <variation>E</variation>
    <location>
        <position position="483"/>
    </location>
</feature>
<feature type="helix" evidence="8">
    <location>
        <begin position="18"/>
        <end position="37"/>
    </location>
</feature>
<feature type="helix" evidence="8">
    <location>
        <begin position="38"/>
        <end position="41"/>
    </location>
</feature>
<feature type="helix" evidence="8">
    <location>
        <begin position="43"/>
        <end position="50"/>
    </location>
</feature>
<feature type="helix" evidence="8">
    <location>
        <begin position="55"/>
        <end position="57"/>
    </location>
</feature>
<feature type="helix" evidence="8">
    <location>
        <begin position="62"/>
        <end position="73"/>
    </location>
</feature>
<feature type="helix" evidence="8">
    <location>
        <begin position="75"/>
        <end position="85"/>
    </location>
</feature>
<feature type="helix" evidence="8">
    <location>
        <begin position="87"/>
        <end position="106"/>
    </location>
</feature>
<feature type="helix" evidence="8">
    <location>
        <begin position="111"/>
        <end position="139"/>
    </location>
</feature>
<feature type="helix" evidence="8">
    <location>
        <begin position="142"/>
        <end position="174"/>
    </location>
</feature>
<feature type="helix" evidence="8">
    <location>
        <begin position="178"/>
        <end position="198"/>
    </location>
</feature>
<feature type="helix" evidence="8">
    <location>
        <begin position="213"/>
        <end position="230"/>
    </location>
</feature>
<feature type="helix" evidence="8">
    <location>
        <begin position="245"/>
        <end position="265"/>
    </location>
</feature>
<feature type="helix" evidence="8">
    <location>
        <begin position="278"/>
        <end position="308"/>
    </location>
</feature>
<feature type="helix" evidence="8">
    <location>
        <begin position="314"/>
        <end position="319"/>
    </location>
</feature>
<feature type="helix" evidence="8">
    <location>
        <begin position="322"/>
        <end position="342"/>
    </location>
</feature>
<feature type="helix" evidence="8">
    <location>
        <begin position="344"/>
        <end position="362"/>
    </location>
</feature>
<feature type="helix" evidence="8">
    <location>
        <begin position="369"/>
        <end position="371"/>
    </location>
</feature>
<feature type="strand" evidence="8">
    <location>
        <begin position="373"/>
        <end position="375"/>
    </location>
</feature>
<feature type="strand" evidence="8">
    <location>
        <begin position="380"/>
        <end position="382"/>
    </location>
</feature>
<feature type="helix" evidence="8">
    <location>
        <begin position="383"/>
        <end position="408"/>
    </location>
</feature>
<feature type="helix" evidence="8">
    <location>
        <begin position="415"/>
        <end position="455"/>
    </location>
</feature>
<feature type="helix" evidence="8">
    <location>
        <begin position="467"/>
        <end position="504"/>
    </location>
</feature>
<feature type="helix" evidence="8">
    <location>
        <begin position="505"/>
        <end position="507"/>
    </location>
</feature>